<dbReference type="EC" id="6.2.1.5" evidence="1 2"/>
<dbReference type="EMBL" id="Z68004">
    <property type="protein sequence ID" value="CAA91981.1"/>
    <property type="molecule type" value="Genomic_DNA"/>
</dbReference>
<dbReference type="PIR" id="T22332">
    <property type="entry name" value="T22332"/>
</dbReference>
<dbReference type="RefSeq" id="NP_509821.1">
    <property type="nucleotide sequence ID" value="NM_077420.7"/>
</dbReference>
<dbReference type="SMR" id="P53588"/>
<dbReference type="BioGRID" id="46191">
    <property type="interactions" value="15"/>
</dbReference>
<dbReference type="DIP" id="DIP-26345N"/>
<dbReference type="FunCoup" id="P53588">
    <property type="interactions" value="3130"/>
</dbReference>
<dbReference type="IntAct" id="P53588">
    <property type="interactions" value="2"/>
</dbReference>
<dbReference type="STRING" id="6239.F47B10.1.1"/>
<dbReference type="PaxDb" id="6239-F47B10.1"/>
<dbReference type="PeptideAtlas" id="P53588"/>
<dbReference type="EnsemblMetazoa" id="F47B10.1.1">
    <property type="protein sequence ID" value="F47B10.1.1"/>
    <property type="gene ID" value="WBGene00009812"/>
</dbReference>
<dbReference type="GeneID" id="181280"/>
<dbReference type="KEGG" id="cel:CELE_F47B10.1"/>
<dbReference type="UCSC" id="F47B10.1.1">
    <property type="organism name" value="c. elegans"/>
</dbReference>
<dbReference type="AGR" id="WB:WBGene00009812"/>
<dbReference type="CTD" id="181280"/>
<dbReference type="WormBase" id="F47B10.1">
    <property type="protein sequence ID" value="CE03351"/>
    <property type="gene ID" value="WBGene00009812"/>
    <property type="gene designation" value="suca-1"/>
</dbReference>
<dbReference type="eggNOG" id="KOG2799">
    <property type="taxonomic scope" value="Eukaryota"/>
</dbReference>
<dbReference type="GeneTree" id="ENSGT00390000010170"/>
<dbReference type="HOGENOM" id="CLU_037430_0_0_1"/>
<dbReference type="InParanoid" id="P53588"/>
<dbReference type="OMA" id="ITACDEV"/>
<dbReference type="OrthoDB" id="1552at2759"/>
<dbReference type="PhylomeDB" id="P53588"/>
<dbReference type="Reactome" id="R-CEL-71403">
    <property type="pathway name" value="Citric acid cycle (TCA cycle)"/>
</dbReference>
<dbReference type="UniPathway" id="UPA00223">
    <property type="reaction ID" value="UER00999"/>
</dbReference>
<dbReference type="PRO" id="PR:P53588"/>
<dbReference type="Proteomes" id="UP000001940">
    <property type="component" value="Chromosome X"/>
</dbReference>
<dbReference type="Bgee" id="WBGene00009812">
    <property type="expression patterns" value="Expressed in embryo and 4 other cell types or tissues"/>
</dbReference>
<dbReference type="GO" id="GO:0005739">
    <property type="term" value="C:mitochondrion"/>
    <property type="evidence" value="ECO:0007005"/>
    <property type="project" value="WormBase"/>
</dbReference>
<dbReference type="GO" id="GO:0042709">
    <property type="term" value="C:succinate-CoA ligase complex"/>
    <property type="evidence" value="ECO:0000318"/>
    <property type="project" value="GO_Central"/>
</dbReference>
<dbReference type="GO" id="GO:0005524">
    <property type="term" value="F:ATP binding"/>
    <property type="evidence" value="ECO:0007669"/>
    <property type="project" value="UniProtKB-UniRule"/>
</dbReference>
<dbReference type="GO" id="GO:0000287">
    <property type="term" value="F:magnesium ion binding"/>
    <property type="evidence" value="ECO:0007669"/>
    <property type="project" value="UniProtKB-UniRule"/>
</dbReference>
<dbReference type="GO" id="GO:0004775">
    <property type="term" value="F:succinate-CoA ligase (ADP-forming) activity"/>
    <property type="evidence" value="ECO:0000318"/>
    <property type="project" value="GO_Central"/>
</dbReference>
<dbReference type="GO" id="GO:0006104">
    <property type="term" value="P:succinyl-CoA metabolic process"/>
    <property type="evidence" value="ECO:0000318"/>
    <property type="project" value="GO_Central"/>
</dbReference>
<dbReference type="GO" id="GO:0006099">
    <property type="term" value="P:tricarboxylic acid cycle"/>
    <property type="evidence" value="ECO:0000318"/>
    <property type="project" value="GO_Central"/>
</dbReference>
<dbReference type="FunFam" id="3.30.470.20:FF:000002">
    <property type="entry name" value="Succinate--CoA ligase [ADP-forming] subunit beta"/>
    <property type="match status" value="1"/>
</dbReference>
<dbReference type="FunFam" id="3.40.50.261:FF:000001">
    <property type="entry name" value="Succinate--CoA ligase [ADP-forming] subunit beta"/>
    <property type="match status" value="1"/>
</dbReference>
<dbReference type="FunFam" id="3.30.1490.20:FF:000004">
    <property type="entry name" value="Succinate--CoA ligase [ADP-forming] subunit beta, mitochondrial"/>
    <property type="match status" value="1"/>
</dbReference>
<dbReference type="Gene3D" id="3.30.1490.20">
    <property type="entry name" value="ATP-grasp fold, A domain"/>
    <property type="match status" value="1"/>
</dbReference>
<dbReference type="Gene3D" id="3.30.470.20">
    <property type="entry name" value="ATP-grasp fold, B domain"/>
    <property type="match status" value="1"/>
</dbReference>
<dbReference type="Gene3D" id="3.40.50.261">
    <property type="entry name" value="Succinyl-CoA synthetase domains"/>
    <property type="match status" value="1"/>
</dbReference>
<dbReference type="HAMAP" id="MF_00558">
    <property type="entry name" value="Succ_CoA_beta"/>
    <property type="match status" value="1"/>
</dbReference>
<dbReference type="HAMAP" id="MF_03220">
    <property type="entry name" value="Succ_CoA_betaA_euk"/>
    <property type="match status" value="1"/>
</dbReference>
<dbReference type="InterPro" id="IPR011761">
    <property type="entry name" value="ATP-grasp"/>
</dbReference>
<dbReference type="InterPro" id="IPR013650">
    <property type="entry name" value="ATP-grasp_succ-CoA_synth-type"/>
</dbReference>
<dbReference type="InterPro" id="IPR013815">
    <property type="entry name" value="ATP_grasp_subdomain_1"/>
</dbReference>
<dbReference type="InterPro" id="IPR017866">
    <property type="entry name" value="Succ-CoA_synthase_bsu_CS"/>
</dbReference>
<dbReference type="InterPro" id="IPR005811">
    <property type="entry name" value="SUCC_ACL_C"/>
</dbReference>
<dbReference type="InterPro" id="IPR034723">
    <property type="entry name" value="Succ_CoA_betaA_euk"/>
</dbReference>
<dbReference type="InterPro" id="IPR005809">
    <property type="entry name" value="Succ_CoA_ligase-like_bsu"/>
</dbReference>
<dbReference type="InterPro" id="IPR016102">
    <property type="entry name" value="Succinyl-CoA_synth-like"/>
</dbReference>
<dbReference type="NCBIfam" id="NF001913">
    <property type="entry name" value="PRK00696.1"/>
    <property type="match status" value="1"/>
</dbReference>
<dbReference type="NCBIfam" id="TIGR01016">
    <property type="entry name" value="sucCoAbeta"/>
    <property type="match status" value="1"/>
</dbReference>
<dbReference type="PANTHER" id="PTHR11815:SF1">
    <property type="entry name" value="SUCCINATE--COA LIGASE [ADP-FORMING] SUBUNIT BETA, MITOCHONDRIAL"/>
    <property type="match status" value="1"/>
</dbReference>
<dbReference type="PANTHER" id="PTHR11815">
    <property type="entry name" value="SUCCINYL-COA SYNTHETASE BETA CHAIN"/>
    <property type="match status" value="1"/>
</dbReference>
<dbReference type="Pfam" id="PF08442">
    <property type="entry name" value="ATP-grasp_2"/>
    <property type="match status" value="1"/>
</dbReference>
<dbReference type="Pfam" id="PF00549">
    <property type="entry name" value="Ligase_CoA"/>
    <property type="match status" value="1"/>
</dbReference>
<dbReference type="PIRSF" id="PIRSF001554">
    <property type="entry name" value="SucCS_beta"/>
    <property type="match status" value="1"/>
</dbReference>
<dbReference type="SUPFAM" id="SSF56059">
    <property type="entry name" value="Glutathione synthetase ATP-binding domain-like"/>
    <property type="match status" value="1"/>
</dbReference>
<dbReference type="SUPFAM" id="SSF52210">
    <property type="entry name" value="Succinyl-CoA synthetase domains"/>
    <property type="match status" value="1"/>
</dbReference>
<dbReference type="PROSITE" id="PS50975">
    <property type="entry name" value="ATP_GRASP"/>
    <property type="match status" value="1"/>
</dbReference>
<dbReference type="PROSITE" id="PS01217">
    <property type="entry name" value="SUCCINYL_COA_LIG_3"/>
    <property type="match status" value="1"/>
</dbReference>
<gene>
    <name evidence="3" type="primary">suca-1</name>
    <name evidence="3" type="ORF">F47B10.1</name>
</gene>
<evidence type="ECO:0000250" key="1">
    <source>
        <dbReference type="UniProtKB" id="Q9YI37"/>
    </source>
</evidence>
<evidence type="ECO:0000255" key="2">
    <source>
        <dbReference type="HAMAP-Rule" id="MF_03220"/>
    </source>
</evidence>
<evidence type="ECO:0000312" key="3">
    <source>
        <dbReference type="WormBase" id="F47B10.1"/>
    </source>
</evidence>
<feature type="transit peptide" description="Mitochondrion" evidence="2">
    <location>
        <begin position="1"/>
        <end position="20"/>
    </location>
</feature>
<feature type="chain" id="PRO_0000033355" description="Succinate--CoA ligase [ADP-forming] subunit beta, mitochondrial" evidence="2">
    <location>
        <begin position="21"/>
        <end position="435"/>
    </location>
</feature>
<feature type="domain" description="ATP-grasp" evidence="2">
    <location>
        <begin position="32"/>
        <end position="259"/>
    </location>
</feature>
<feature type="binding site" evidence="2">
    <location>
        <position position="69"/>
    </location>
    <ligand>
        <name>ATP</name>
        <dbReference type="ChEBI" id="CHEBI:30616"/>
    </ligand>
</feature>
<feature type="binding site" evidence="2">
    <location>
        <begin position="76"/>
        <end position="78"/>
    </location>
    <ligand>
        <name>ATP</name>
        <dbReference type="ChEBI" id="CHEBI:30616"/>
    </ligand>
</feature>
<feature type="binding site" evidence="2">
    <location>
        <position position="229"/>
    </location>
    <ligand>
        <name>Mg(2+)</name>
        <dbReference type="ChEBI" id="CHEBI:18420"/>
    </ligand>
</feature>
<feature type="binding site" evidence="2">
    <location>
        <position position="243"/>
    </location>
    <ligand>
        <name>Mg(2+)</name>
        <dbReference type="ChEBI" id="CHEBI:18420"/>
    </ligand>
</feature>
<feature type="binding site" evidence="2">
    <location>
        <position position="294"/>
    </location>
    <ligand>
        <name>substrate</name>
        <note>ligand shared with subunit alpha</note>
    </ligand>
</feature>
<feature type="binding site" evidence="2">
    <location>
        <begin position="352"/>
        <end position="354"/>
    </location>
    <ligand>
        <name>substrate</name>
        <note>ligand shared with subunit alpha</note>
    </ligand>
</feature>
<feature type="site" description="Important for substrate specificity" evidence="2">
    <location>
        <position position="65"/>
    </location>
</feature>
<feature type="site" description="Important for substrate specificity" evidence="2">
    <location>
        <position position="133"/>
    </location>
</feature>
<sequence length="435" mass="47419">MIGRISQPLLNTSQKFMAPAARTLMLHEHHGMKILQNYEIKVPPFGVAQDAETAFSEAKRIGGKDYVVKAQVLAGGRGKGRFSSGLQGGVQIVFTPDEVKQKAGMMIGANLITKQTDHRGKKCEEVMVCKRLFTRREYYFSITLDRNTNGPIVIASSQGGVNIEEVAATNPDAIVKMPIDVNVGITKELAHEIAVKMGFSKDCEQQASEIIEKLYQMFKGSDATLVEINPMAEDVNGDVYCMDCKLLLDSNAEFRQAKLFDLKDKKQEDELEIRAAAANLNYIRLDGTIGCMVNGAGLAMATMDIIKLHGGEPANFLDVGGGATVEQVTEAFKIITADKDKVSAILVNIFGGIMRCDVIAQGIIQAARELDLKIPIVVRLQGTKVEDAKALIATSQLRILPCDNLDEAAKMVVKLSNIVDLARATNVDVKFELSI</sequence>
<proteinExistence type="inferred from homology"/>
<comment type="function">
    <text evidence="2">ATP-specific succinyl-CoA synthetase functions in the citric acid cycle (TCA), coupling the hydrolysis of succinyl-CoA to the synthesis of ATP and thus represents the only step of substrate-level phosphorylation in the TCA. The beta subunit provides nucleotide specificity of the enzyme and binds the substrate succinate, while the binding sites for coenzyme A and phosphate are found in the alpha subunit.</text>
</comment>
<comment type="catalytic activity">
    <reaction evidence="2">
        <text>succinate + ATP + CoA = succinyl-CoA + ADP + phosphate</text>
        <dbReference type="Rhea" id="RHEA:17661"/>
        <dbReference type="ChEBI" id="CHEBI:30031"/>
        <dbReference type="ChEBI" id="CHEBI:30616"/>
        <dbReference type="ChEBI" id="CHEBI:43474"/>
        <dbReference type="ChEBI" id="CHEBI:57287"/>
        <dbReference type="ChEBI" id="CHEBI:57292"/>
        <dbReference type="ChEBI" id="CHEBI:456216"/>
        <dbReference type="EC" id="6.2.1.5"/>
    </reaction>
</comment>
<comment type="cofactor">
    <cofactor evidence="2">
        <name>Mg(2+)</name>
        <dbReference type="ChEBI" id="CHEBI:18420"/>
    </cofactor>
    <text evidence="2">Binds 1 Mg(2+) ion per subunit.</text>
</comment>
<comment type="pathway">
    <text evidence="2">Carbohydrate metabolism; tricarboxylic acid cycle; succinate from succinyl-CoA (ligase route): step 1/1.</text>
</comment>
<comment type="subunit">
    <text evidence="2">Heterodimer of an alpha and a beta subunit. The beta subunit determines specificity for ATP.</text>
</comment>
<comment type="subcellular location">
    <subcellularLocation>
        <location evidence="2">Mitochondrion</location>
    </subcellularLocation>
</comment>
<comment type="similarity">
    <text evidence="2">Belongs to the succinate/malate CoA ligase beta subunit family. ATP-specific subunit beta subfamily.</text>
</comment>
<reference key="1">
    <citation type="journal article" date="1998" name="Science">
        <title>Genome sequence of the nematode C. elegans: a platform for investigating biology.</title>
        <authorList>
            <consortium name="The C. elegans sequencing consortium"/>
        </authorList>
    </citation>
    <scope>NUCLEOTIDE SEQUENCE [LARGE SCALE GENOMIC DNA]</scope>
    <source>
        <strain>Bristol N2</strain>
    </source>
</reference>
<name>SUCB1_CAEEL</name>
<accession>P53588</accession>
<keyword id="KW-0067">ATP-binding</keyword>
<keyword id="KW-0436">Ligase</keyword>
<keyword id="KW-0460">Magnesium</keyword>
<keyword id="KW-0479">Metal-binding</keyword>
<keyword id="KW-0496">Mitochondrion</keyword>
<keyword id="KW-0547">Nucleotide-binding</keyword>
<keyword id="KW-1185">Reference proteome</keyword>
<keyword id="KW-0809">Transit peptide</keyword>
<keyword id="KW-0816">Tricarboxylic acid cycle</keyword>
<organism>
    <name type="scientific">Caenorhabditis elegans</name>
    <dbReference type="NCBI Taxonomy" id="6239"/>
    <lineage>
        <taxon>Eukaryota</taxon>
        <taxon>Metazoa</taxon>
        <taxon>Ecdysozoa</taxon>
        <taxon>Nematoda</taxon>
        <taxon>Chromadorea</taxon>
        <taxon>Rhabditida</taxon>
        <taxon>Rhabditina</taxon>
        <taxon>Rhabditomorpha</taxon>
        <taxon>Rhabditoidea</taxon>
        <taxon>Rhabditidae</taxon>
        <taxon>Peloderinae</taxon>
        <taxon>Caenorhabditis</taxon>
    </lineage>
</organism>
<protein>
    <recommendedName>
        <fullName evidence="2">Succinate--CoA ligase [ADP-forming] subunit beta, mitochondrial</fullName>
        <ecNumber evidence="1 2">6.2.1.5</ecNumber>
    </recommendedName>
    <alternativeName>
        <fullName evidence="2">ATP-specific succinyl-CoA synthetase subunit beta</fullName>
        <shortName evidence="2">A-SCS</shortName>
    </alternativeName>
    <alternativeName>
        <fullName evidence="2">Succinyl-CoA synthetase beta-A chain</fullName>
        <shortName evidence="2">SCS-betaA</shortName>
    </alternativeName>
</protein>